<accession>A0A286LEZ8</accession>
<comment type="function">
    <text evidence="1 3 4">L-tryptophan decarboxylase; part of the gene cluster that mediates the biosynthesis of psilocybin, a psychotropic tryptamine-derived natural product (PubMed:28763571, PubMed:30283667). The first step in the pathway is the decarboxylation of L-tryptophan to tryptamine by the decarboxylase psiD. PsiD does not decarboxylate phenylalanine, tyrosine, or 5-hydroxy- L -tryptophan (5-HTP) (PubMed:30283667). 4-hydroxy-L-tryptophan is accepted as substrate by psiD as well. The cytochrome P450 monooxygenase psiH then converts tryptamine to 4-hydroxytryptamine. The kinase psiK catalyzes the 4-O-phosphorylation step by converting 4-hydroxytryptamine into norbaeocystin. The methyltransferase psiM then catalyzes iterative methyl transfer to the amino group of norbaeocystin to yield psilocybin via a monomethylated intermediate, baeocystin. 4-hydroxy-6-methyl-l-tryptophancan also be converted the decarboxylase PsiD, kinase PsiK, and methyltransferase PsiM into respectively 6-methyl-norbaeocystin, 6-methylbaeocystin, and 6-methylpsilocybin (By similarity).</text>
</comment>
<comment type="catalytic activity">
    <reaction evidence="4">
        <text>L-tryptophan + H(+) = tryptamine + CO2</text>
        <dbReference type="Rhea" id="RHEA:30339"/>
        <dbReference type="ChEBI" id="CHEBI:15378"/>
        <dbReference type="ChEBI" id="CHEBI:16526"/>
        <dbReference type="ChEBI" id="CHEBI:57887"/>
        <dbReference type="ChEBI" id="CHEBI:57912"/>
        <dbReference type="EC" id="4.1.1.105"/>
    </reaction>
    <physiologicalReaction direction="left-to-right" evidence="4">
        <dbReference type="Rhea" id="RHEA:30340"/>
    </physiologicalReaction>
</comment>
<comment type="pathway">
    <text evidence="4">Secondary metabolite biosynthesis.</text>
</comment>
<comment type="biotechnology">
    <text evidence="2">The pharmaceutical interesting psilocybin as a treatment option against depression and anxiety is being investigated in advanced clinical trials.</text>
</comment>
<comment type="similarity">
    <text evidence="6">Belongs to the phosphatidylserine decarboxylase family.</text>
</comment>
<gene>
    <name evidence="5" type="primary">psiD</name>
</gene>
<keyword id="KW-0210">Decarboxylase</keyword>
<keyword id="KW-0456">Lyase</keyword>
<sequence>MQVLPACQSSALKTLCPSPEAFRKLGWLPTSDEVYNEFIDDLTGRTCNEKYSSQVTLLKPIQDFKTFIENDPIVYQEFISMFEGIEQSPTNYHELCNMFNDIFRKAPLYGDLGPPVYMIMARIMNTQAGFSAFTKESLNFHFKKLFDTWGLFLSSKNSRNVLVADQFDDKHYGWFSERAKTAMMINYPGRTFEKVFICDEHVPYHGFTSYDDFFNRRFRDKDTDRPVVGGVTDTTLIGAACESLSYNVSHNVQSLDTLVIKGEAYSLKHLLHNDPFTPQFEHGSIIQGFLNVTAYHRWHSPVNGTIVKIVNVPGTYFAQAPYTIGSPIPDNDRDPPPYLKSLVYFSNIAARQIMFIEADNKDIGLIFLVFIGMTEISTCEATVCEGQHVNRGDDLGMFHFGGSSFALGLRKDSKAKILEKFAKPGTVIRINELVASVRK</sequence>
<reference key="1">
    <citation type="journal article" date="2017" name="Angew. Chem. Int. Ed.">
        <title>Enzymatic synthesis of psilocybin.</title>
        <authorList>
            <person name="Fricke J."/>
            <person name="Blei F."/>
            <person name="Hoffmeister D."/>
        </authorList>
    </citation>
    <scope>NUCLEOTIDE SEQUENCE [MRNA]</scope>
    <scope>IDENTIFICATION</scope>
    <scope>FUNCTION</scope>
    <source>
        <strain>FSU 12416</strain>
    </source>
</reference>
<reference key="2">
    <citation type="journal article" date="2016" name="J. Psychopharmacol.">
        <title>Rapid and sustained symptom reduction following psilocybin treatment for anxiety and depression in patients with life-threatening cancer: a randomized controlled trial.</title>
        <authorList>
            <person name="Ross S."/>
            <person name="Bossis A."/>
            <person name="Guss J."/>
            <person name="Agin-Liebes G."/>
            <person name="Malone T."/>
            <person name="Cohen B."/>
            <person name="Mennenga S.E."/>
            <person name="Belser A."/>
            <person name="Kalliontzi K."/>
            <person name="Babb J."/>
            <person name="Su Z."/>
            <person name="Corby P."/>
            <person name="Schmidt B.L."/>
        </authorList>
    </citation>
    <scope>BIOTECHNOLOGY</scope>
</reference>
<reference key="3">
    <citation type="journal article" date="2018" name="Evol. Lett.">
        <title>Horizontal gene cluster transfer increased hallucinogenic mushroom diversity.</title>
        <authorList>
            <person name="Reynolds H.T."/>
            <person name="Vijayakumar V."/>
            <person name="Gluck-Thaler E."/>
            <person name="Korotkin H.B."/>
            <person name="Matheny P.B."/>
            <person name="Slot J.C."/>
        </authorList>
    </citation>
    <scope>FUNCTION</scope>
    <scope>CATALYTIC ACTIVITY</scope>
    <scope>PATHWAY</scope>
</reference>
<dbReference type="EC" id="4.1.1.105" evidence="4"/>
<dbReference type="EMBL" id="KY984104">
    <property type="protein sequence ID" value="ASU62242.1"/>
    <property type="molecule type" value="mRNA"/>
</dbReference>
<dbReference type="SMR" id="A0A286LEZ8"/>
<dbReference type="GO" id="GO:0005739">
    <property type="term" value="C:mitochondrion"/>
    <property type="evidence" value="ECO:0007669"/>
    <property type="project" value="TreeGrafter"/>
</dbReference>
<dbReference type="GO" id="GO:0036469">
    <property type="term" value="F:L-tryptophan decarboxylase activity"/>
    <property type="evidence" value="ECO:0007669"/>
    <property type="project" value="UniProtKB-EC"/>
</dbReference>
<dbReference type="GO" id="GO:0004609">
    <property type="term" value="F:phosphatidylserine decarboxylase activity"/>
    <property type="evidence" value="ECO:0007669"/>
    <property type="project" value="InterPro"/>
</dbReference>
<dbReference type="GO" id="GO:0006646">
    <property type="term" value="P:phosphatidylethanolamine biosynthetic process"/>
    <property type="evidence" value="ECO:0007669"/>
    <property type="project" value="TreeGrafter"/>
</dbReference>
<dbReference type="GO" id="GO:0140380">
    <property type="term" value="P:psilocybin biosynthetic process"/>
    <property type="evidence" value="ECO:0000314"/>
    <property type="project" value="GO_Central"/>
</dbReference>
<dbReference type="InterPro" id="IPR003817">
    <property type="entry name" value="PS_Dcarbxylase"/>
</dbReference>
<dbReference type="InterPro" id="IPR022237">
    <property type="entry name" value="PsiD-like"/>
</dbReference>
<dbReference type="PANTHER" id="PTHR10067">
    <property type="entry name" value="PHOSPHATIDYLSERINE DECARBOXYLASE"/>
    <property type="match status" value="1"/>
</dbReference>
<dbReference type="PANTHER" id="PTHR10067:SF9">
    <property type="entry name" value="PHOSPHATIDYLSERINE DECARBOXYLASE FAMILY PROTEIN (AFU_ORTHOLOGUE AFUA_7G01730)"/>
    <property type="match status" value="1"/>
</dbReference>
<dbReference type="Pfam" id="PF02666">
    <property type="entry name" value="PS_Dcarbxylase"/>
    <property type="match status" value="1"/>
</dbReference>
<dbReference type="Pfam" id="PF12588">
    <property type="entry name" value="PSDC"/>
    <property type="match status" value="1"/>
</dbReference>
<proteinExistence type="evidence at protein level"/>
<feature type="chain" id="PRO_0000445827" description="L-tryptophan decarboxylase">
    <location>
        <begin position="1"/>
        <end position="439"/>
    </location>
</feature>
<name>PSID_PSICY</name>
<organism>
    <name type="scientific">Psilocybe cyanescens</name>
    <dbReference type="NCBI Taxonomy" id="93625"/>
    <lineage>
        <taxon>Eukaryota</taxon>
        <taxon>Fungi</taxon>
        <taxon>Dikarya</taxon>
        <taxon>Basidiomycota</taxon>
        <taxon>Agaricomycotina</taxon>
        <taxon>Agaricomycetes</taxon>
        <taxon>Agaricomycetidae</taxon>
        <taxon>Agaricales</taxon>
        <taxon>Agaricineae</taxon>
        <taxon>Strophariaceae</taxon>
        <taxon>Psilocybe</taxon>
    </lineage>
</organism>
<protein>
    <recommendedName>
        <fullName evidence="5">L-tryptophan decarboxylase</fullName>
        <ecNumber evidence="4">4.1.1.105</ecNumber>
    </recommendedName>
    <alternativeName>
        <fullName evidence="5">Psilocybin biosynthesis decarboxylase</fullName>
    </alternativeName>
</protein>
<evidence type="ECO:0000250" key="1">
    <source>
        <dbReference type="UniProtKB" id="P0DPA6"/>
    </source>
</evidence>
<evidence type="ECO:0000269" key="2">
    <source>
    </source>
</evidence>
<evidence type="ECO:0000269" key="3">
    <source>
    </source>
</evidence>
<evidence type="ECO:0000269" key="4">
    <source>
    </source>
</evidence>
<evidence type="ECO:0000303" key="5">
    <source>
    </source>
</evidence>
<evidence type="ECO:0000305" key="6"/>